<evidence type="ECO:0000255" key="1">
    <source>
        <dbReference type="HAMAP-Rule" id="MF_00290"/>
    </source>
</evidence>
<reference key="1">
    <citation type="journal article" date="2009" name="Stand. Genomic Sci.">
        <title>Complete genome sequence of Methanoculleus marisnigri Romesser et al. 1981 type strain JR1.</title>
        <authorList>
            <person name="Anderson I.J."/>
            <person name="Sieprawska-Lupa M."/>
            <person name="Lapidus A."/>
            <person name="Nolan M."/>
            <person name="Copeland A."/>
            <person name="Glavina Del Rio T."/>
            <person name="Tice H."/>
            <person name="Dalin E."/>
            <person name="Barry K."/>
            <person name="Saunders E."/>
            <person name="Han C."/>
            <person name="Brettin T."/>
            <person name="Detter J.C."/>
            <person name="Bruce D."/>
            <person name="Mikhailova N."/>
            <person name="Pitluck S."/>
            <person name="Hauser L."/>
            <person name="Land M."/>
            <person name="Lucas S."/>
            <person name="Richardson P."/>
            <person name="Whitman W.B."/>
            <person name="Kyrpides N.C."/>
        </authorList>
    </citation>
    <scope>NUCLEOTIDE SEQUENCE [LARGE SCALE GENOMIC DNA]</scope>
    <source>
        <strain>ATCC 35101 / DSM 1498 / JR1</strain>
    </source>
</reference>
<keyword id="KW-0479">Metal-binding</keyword>
<keyword id="KW-0489">Methyltransferase</keyword>
<keyword id="KW-0694">RNA-binding</keyword>
<keyword id="KW-0949">S-adenosyl-L-methionine</keyword>
<keyword id="KW-0808">Transferase</keyword>
<keyword id="KW-0819">tRNA processing</keyword>
<keyword id="KW-0820">tRNA-binding</keyword>
<keyword id="KW-0862">Zinc</keyword>
<accession>A3CW75</accession>
<proteinExistence type="inferred from homology"/>
<gene>
    <name evidence="1" type="primary">trm1</name>
    <name type="ordered locus">Memar_1698</name>
</gene>
<organism>
    <name type="scientific">Methanoculleus marisnigri (strain ATCC 35101 / DSM 1498 / JR1)</name>
    <dbReference type="NCBI Taxonomy" id="368407"/>
    <lineage>
        <taxon>Archaea</taxon>
        <taxon>Methanobacteriati</taxon>
        <taxon>Methanobacteriota</taxon>
        <taxon>Stenosarchaea group</taxon>
        <taxon>Methanomicrobia</taxon>
        <taxon>Methanomicrobiales</taxon>
        <taxon>Methanomicrobiaceae</taxon>
        <taxon>Methanoculleus</taxon>
    </lineage>
</organism>
<dbReference type="EC" id="2.1.1.216" evidence="1"/>
<dbReference type="EMBL" id="CP000562">
    <property type="protein sequence ID" value="ABN57625.1"/>
    <property type="molecule type" value="Genomic_DNA"/>
</dbReference>
<dbReference type="RefSeq" id="WP_011844536.1">
    <property type="nucleotide sequence ID" value="NC_009051.1"/>
</dbReference>
<dbReference type="SMR" id="A3CW75"/>
<dbReference type="STRING" id="368407.Memar_1698"/>
<dbReference type="GeneID" id="4848285"/>
<dbReference type="KEGG" id="mem:Memar_1698"/>
<dbReference type="eggNOG" id="arCOG01219">
    <property type="taxonomic scope" value="Archaea"/>
</dbReference>
<dbReference type="HOGENOM" id="CLU_010862_5_1_2"/>
<dbReference type="OrthoDB" id="372177at2157"/>
<dbReference type="Proteomes" id="UP000002146">
    <property type="component" value="Chromosome"/>
</dbReference>
<dbReference type="GO" id="GO:0160104">
    <property type="term" value="F:tRNA (guanine(26)-N2)-dimethyltransferase activity"/>
    <property type="evidence" value="ECO:0007669"/>
    <property type="project" value="UniProtKB-UniRule"/>
</dbReference>
<dbReference type="GO" id="GO:0000049">
    <property type="term" value="F:tRNA binding"/>
    <property type="evidence" value="ECO:0007669"/>
    <property type="project" value="UniProtKB-KW"/>
</dbReference>
<dbReference type="GO" id="GO:0002940">
    <property type="term" value="P:tRNA N2-guanine methylation"/>
    <property type="evidence" value="ECO:0007669"/>
    <property type="project" value="TreeGrafter"/>
</dbReference>
<dbReference type="CDD" id="cd02440">
    <property type="entry name" value="AdoMet_MTases"/>
    <property type="match status" value="1"/>
</dbReference>
<dbReference type="Gene3D" id="3.30.56.70">
    <property type="entry name" value="N2,N2-dimethylguanosine tRNA methyltransferase, C-terminal domain"/>
    <property type="match status" value="1"/>
</dbReference>
<dbReference type="Gene3D" id="3.40.50.150">
    <property type="entry name" value="Vaccinia Virus protein VP39"/>
    <property type="match status" value="1"/>
</dbReference>
<dbReference type="HAMAP" id="MF_00290">
    <property type="entry name" value="tRNA_dimethyltr_TRM1"/>
    <property type="match status" value="1"/>
</dbReference>
<dbReference type="InterPro" id="IPR029063">
    <property type="entry name" value="SAM-dependent_MTases_sf"/>
</dbReference>
<dbReference type="InterPro" id="IPR002905">
    <property type="entry name" value="Trm1"/>
</dbReference>
<dbReference type="InterPro" id="IPR022923">
    <property type="entry name" value="TRM1_arc_bac"/>
</dbReference>
<dbReference type="InterPro" id="IPR042296">
    <property type="entry name" value="tRNA_met_Trm1_C"/>
</dbReference>
<dbReference type="NCBIfam" id="TIGR00308">
    <property type="entry name" value="TRM1"/>
    <property type="match status" value="1"/>
</dbReference>
<dbReference type="PANTHER" id="PTHR10631">
    <property type="entry name" value="N 2 ,N 2 -DIMETHYLGUANOSINE TRNA METHYLTRANSFERASE"/>
    <property type="match status" value="1"/>
</dbReference>
<dbReference type="PANTHER" id="PTHR10631:SF3">
    <property type="entry name" value="TRNA (GUANINE(26)-N(2))-DIMETHYLTRANSFERASE"/>
    <property type="match status" value="1"/>
</dbReference>
<dbReference type="Pfam" id="PF02005">
    <property type="entry name" value="TRM"/>
    <property type="match status" value="1"/>
</dbReference>
<dbReference type="SUPFAM" id="SSF53335">
    <property type="entry name" value="S-adenosyl-L-methionine-dependent methyltransferases"/>
    <property type="match status" value="1"/>
</dbReference>
<dbReference type="PROSITE" id="PS51626">
    <property type="entry name" value="SAM_MT_TRM1"/>
    <property type="match status" value="1"/>
</dbReference>
<feature type="chain" id="PRO_1000197034" description="tRNA (guanine(26)-N(2))-dimethyltransferase">
    <location>
        <begin position="1"/>
        <end position="371"/>
    </location>
</feature>
<feature type="domain" description="Trm1 methyltransferase" evidence="1">
    <location>
        <begin position="4"/>
        <end position="368"/>
    </location>
</feature>
<feature type="binding site" evidence="1">
    <location>
        <position position="41"/>
    </location>
    <ligand>
        <name>S-adenosyl-L-methionine</name>
        <dbReference type="ChEBI" id="CHEBI:59789"/>
    </ligand>
</feature>
<feature type="binding site" evidence="1">
    <location>
        <position position="66"/>
    </location>
    <ligand>
        <name>S-adenosyl-L-methionine</name>
        <dbReference type="ChEBI" id="CHEBI:59789"/>
    </ligand>
</feature>
<feature type="binding site" evidence="1">
    <location>
        <position position="82"/>
    </location>
    <ligand>
        <name>S-adenosyl-L-methionine</name>
        <dbReference type="ChEBI" id="CHEBI:59789"/>
    </ligand>
</feature>
<feature type="binding site" evidence="1">
    <location>
        <position position="108"/>
    </location>
    <ligand>
        <name>S-adenosyl-L-methionine</name>
        <dbReference type="ChEBI" id="CHEBI:59789"/>
    </ligand>
</feature>
<feature type="binding site" evidence="1">
    <location>
        <position position="109"/>
    </location>
    <ligand>
        <name>S-adenosyl-L-methionine</name>
        <dbReference type="ChEBI" id="CHEBI:59789"/>
    </ligand>
</feature>
<feature type="binding site" evidence="1">
    <location>
        <position position="237"/>
    </location>
    <ligand>
        <name>Zn(2+)</name>
        <dbReference type="ChEBI" id="CHEBI:29105"/>
    </ligand>
</feature>
<feature type="binding site" evidence="1">
    <location>
        <position position="240"/>
    </location>
    <ligand>
        <name>Zn(2+)</name>
        <dbReference type="ChEBI" id="CHEBI:29105"/>
    </ligand>
</feature>
<feature type="binding site" evidence="1">
    <location>
        <position position="256"/>
    </location>
    <ligand>
        <name>Zn(2+)</name>
        <dbReference type="ChEBI" id="CHEBI:29105"/>
    </ligand>
</feature>
<feature type="binding site" evidence="1">
    <location>
        <position position="259"/>
    </location>
    <ligand>
        <name>Zn(2+)</name>
        <dbReference type="ChEBI" id="CHEBI:29105"/>
    </ligand>
</feature>
<sequence length="371" mass="40568">MDVVEVTEGRTRFFVSRQDPHLQFPPGSGQVFYNSRMEMNRDATVLLLSVLRPESYLDAMGASGVRGLRVAHEVGIPVTINDWNAKAVDLARQNVEALGLVAEVTHGDANVLMSGRTFDAVDLDPFGTPAPFVDSAARSAGNYLFVTATDTAPLCGAHLKAGMRRYFSRPRNTEYHAEVGLRTLMGFVVREVIKYDRGVEPLFCYAHEHFHRLHLRLRYGAAAADRALARIGYVMQCPNCLYRSEQTGMLPEPEECPLCSAALVPVGPLWTGGINDDATLAAMQEALPSVTAGTGARIGRLLATCRQELDTSSHYDYHVIAKRLRVSPGRIETVIERLVALGYRASRAHYSGTALKTDAPLPVLEKVVSGG</sequence>
<name>TRM1_METMJ</name>
<comment type="function">
    <text evidence="1">Dimethylates a single guanine residue at position 26 of a number of tRNAs using S-adenosyl-L-methionine as donor of the methyl groups.</text>
</comment>
<comment type="catalytic activity">
    <reaction evidence="1">
        <text>guanosine(26) in tRNA + 2 S-adenosyl-L-methionine = N(2)-dimethylguanosine(26) in tRNA + 2 S-adenosyl-L-homocysteine + 2 H(+)</text>
        <dbReference type="Rhea" id="RHEA:43140"/>
        <dbReference type="Rhea" id="RHEA-COMP:10359"/>
        <dbReference type="Rhea" id="RHEA-COMP:10360"/>
        <dbReference type="ChEBI" id="CHEBI:15378"/>
        <dbReference type="ChEBI" id="CHEBI:57856"/>
        <dbReference type="ChEBI" id="CHEBI:59789"/>
        <dbReference type="ChEBI" id="CHEBI:74269"/>
        <dbReference type="ChEBI" id="CHEBI:74513"/>
        <dbReference type="EC" id="2.1.1.216"/>
    </reaction>
</comment>
<comment type="similarity">
    <text evidence="1">Belongs to the class I-like SAM-binding methyltransferase superfamily. Trm1 family.</text>
</comment>
<protein>
    <recommendedName>
        <fullName evidence="1">tRNA (guanine(26)-N(2))-dimethyltransferase</fullName>
        <ecNumber evidence="1">2.1.1.216</ecNumber>
    </recommendedName>
    <alternativeName>
        <fullName evidence="1">tRNA 2,2-dimethylguanosine-26 methyltransferase</fullName>
    </alternativeName>
    <alternativeName>
        <fullName evidence="1">tRNA(guanine-26,N(2)-N(2)) methyltransferase</fullName>
    </alternativeName>
    <alternativeName>
        <fullName evidence="1">tRNA(m(2,2)G26)dimethyltransferase</fullName>
    </alternativeName>
</protein>